<organism>
    <name type="scientific">Streptococcus equi subsp. zooepidemicus (strain MGCS10565)</name>
    <dbReference type="NCBI Taxonomy" id="552526"/>
    <lineage>
        <taxon>Bacteria</taxon>
        <taxon>Bacillati</taxon>
        <taxon>Bacillota</taxon>
        <taxon>Bacilli</taxon>
        <taxon>Lactobacillales</taxon>
        <taxon>Streptococcaceae</taxon>
        <taxon>Streptococcus</taxon>
    </lineage>
</organism>
<reference key="1">
    <citation type="journal article" date="2008" name="PLoS ONE">
        <title>Genome sequence of a lancefield group C Streptococcus zooepidemicus strain causing epidemic nephritis: new information about an old disease.</title>
        <authorList>
            <person name="Beres S.B."/>
            <person name="Sesso R."/>
            <person name="Pinto S.W.L."/>
            <person name="Hoe N.P."/>
            <person name="Porcella S.F."/>
            <person name="Deleo F.R."/>
            <person name="Musser J.M."/>
        </authorList>
    </citation>
    <scope>NUCLEOTIDE SEQUENCE [LARGE SCALE GENOMIC DNA]</scope>
    <source>
        <strain>MGCS10565</strain>
    </source>
</reference>
<dbReference type="EC" id="1.8.4.11" evidence="1"/>
<dbReference type="EMBL" id="CP001129">
    <property type="protein sequence ID" value="ACG62782.1"/>
    <property type="molecule type" value="Genomic_DNA"/>
</dbReference>
<dbReference type="RefSeq" id="WP_012516044.1">
    <property type="nucleotide sequence ID" value="NC_011134.1"/>
</dbReference>
<dbReference type="SMR" id="B4U465"/>
<dbReference type="KEGG" id="sez:Sez_1448"/>
<dbReference type="HOGENOM" id="CLU_031040_10_1_9"/>
<dbReference type="Proteomes" id="UP000001873">
    <property type="component" value="Chromosome"/>
</dbReference>
<dbReference type="GO" id="GO:0033744">
    <property type="term" value="F:L-methionine:thioredoxin-disulfide S-oxidoreductase activity"/>
    <property type="evidence" value="ECO:0007669"/>
    <property type="project" value="RHEA"/>
</dbReference>
<dbReference type="GO" id="GO:0008113">
    <property type="term" value="F:peptide-methionine (S)-S-oxide reductase activity"/>
    <property type="evidence" value="ECO:0007669"/>
    <property type="project" value="UniProtKB-UniRule"/>
</dbReference>
<dbReference type="GO" id="GO:0036211">
    <property type="term" value="P:protein modification process"/>
    <property type="evidence" value="ECO:0007669"/>
    <property type="project" value="UniProtKB-UniRule"/>
</dbReference>
<dbReference type="Gene3D" id="3.30.1060.10">
    <property type="entry name" value="Peptide methionine sulphoxide reductase MsrA"/>
    <property type="match status" value="1"/>
</dbReference>
<dbReference type="HAMAP" id="MF_01401">
    <property type="entry name" value="MsrA"/>
    <property type="match status" value="1"/>
</dbReference>
<dbReference type="InterPro" id="IPR002569">
    <property type="entry name" value="Met_Sox_Rdtase_MsrA_dom"/>
</dbReference>
<dbReference type="InterPro" id="IPR036509">
    <property type="entry name" value="Met_Sox_Rdtase_MsrA_sf"/>
</dbReference>
<dbReference type="NCBIfam" id="TIGR00401">
    <property type="entry name" value="msrA"/>
    <property type="match status" value="1"/>
</dbReference>
<dbReference type="PANTHER" id="PTHR43774">
    <property type="entry name" value="PEPTIDE METHIONINE SULFOXIDE REDUCTASE"/>
    <property type="match status" value="1"/>
</dbReference>
<dbReference type="PANTHER" id="PTHR43774:SF1">
    <property type="entry name" value="PEPTIDE METHIONINE SULFOXIDE REDUCTASE MSRA 2"/>
    <property type="match status" value="1"/>
</dbReference>
<dbReference type="Pfam" id="PF01625">
    <property type="entry name" value="PMSR"/>
    <property type="match status" value="1"/>
</dbReference>
<dbReference type="SUPFAM" id="SSF55068">
    <property type="entry name" value="Peptide methionine sulfoxide reductase"/>
    <property type="match status" value="1"/>
</dbReference>
<feature type="chain" id="PRO_1000145439" description="Peptide methionine sulfoxide reductase MsrA">
    <location>
        <begin position="1"/>
        <end position="169"/>
    </location>
</feature>
<feature type="active site" evidence="1">
    <location>
        <position position="10"/>
    </location>
</feature>
<name>MSRA_STREM</name>
<gene>
    <name evidence="1" type="primary">msrA</name>
    <name type="ordered locus">Sez_1448</name>
</gene>
<evidence type="ECO:0000255" key="1">
    <source>
        <dbReference type="HAMAP-Rule" id="MF_01401"/>
    </source>
</evidence>
<sequence>MERAIFAGGCFWCMVQPFEEQAGILSVRSGYTGGHVPNPSYEQVCSKTTGHTEAVEIIFDPSLISYSDLVELYWAQTDPTDAFGQFEDRGDNYRPVIYYTDERQREIAERSKQSLQASGRFDQPIVTSIEPAEPFYLAEDYHQGFYQKNPQRYAQSSAIRHQFLEEHWQ</sequence>
<protein>
    <recommendedName>
        <fullName evidence="1">Peptide methionine sulfoxide reductase MsrA</fullName>
        <shortName evidence="1">Protein-methionine-S-oxide reductase</shortName>
        <ecNumber evidence="1">1.8.4.11</ecNumber>
    </recommendedName>
    <alternativeName>
        <fullName evidence="1">Peptide-methionine (S)-S-oxide reductase</fullName>
        <shortName evidence="1">Peptide Met(O) reductase</shortName>
    </alternativeName>
</protein>
<comment type="function">
    <text evidence="1">Has an important function as a repair enzyme for proteins that have been inactivated by oxidation. Catalyzes the reversible oxidation-reduction of methionine sulfoxide in proteins to methionine.</text>
</comment>
<comment type="catalytic activity">
    <reaction evidence="1">
        <text>L-methionyl-[protein] + [thioredoxin]-disulfide + H2O = L-methionyl-(S)-S-oxide-[protein] + [thioredoxin]-dithiol</text>
        <dbReference type="Rhea" id="RHEA:14217"/>
        <dbReference type="Rhea" id="RHEA-COMP:10698"/>
        <dbReference type="Rhea" id="RHEA-COMP:10700"/>
        <dbReference type="Rhea" id="RHEA-COMP:12313"/>
        <dbReference type="Rhea" id="RHEA-COMP:12315"/>
        <dbReference type="ChEBI" id="CHEBI:15377"/>
        <dbReference type="ChEBI" id="CHEBI:16044"/>
        <dbReference type="ChEBI" id="CHEBI:29950"/>
        <dbReference type="ChEBI" id="CHEBI:44120"/>
        <dbReference type="ChEBI" id="CHEBI:50058"/>
        <dbReference type="EC" id="1.8.4.11"/>
    </reaction>
</comment>
<comment type="catalytic activity">
    <reaction evidence="1">
        <text>[thioredoxin]-disulfide + L-methionine + H2O = L-methionine (S)-S-oxide + [thioredoxin]-dithiol</text>
        <dbReference type="Rhea" id="RHEA:19993"/>
        <dbReference type="Rhea" id="RHEA-COMP:10698"/>
        <dbReference type="Rhea" id="RHEA-COMP:10700"/>
        <dbReference type="ChEBI" id="CHEBI:15377"/>
        <dbReference type="ChEBI" id="CHEBI:29950"/>
        <dbReference type="ChEBI" id="CHEBI:50058"/>
        <dbReference type="ChEBI" id="CHEBI:57844"/>
        <dbReference type="ChEBI" id="CHEBI:58772"/>
        <dbReference type="EC" id="1.8.4.11"/>
    </reaction>
</comment>
<comment type="similarity">
    <text evidence="1">Belongs to the MsrA Met sulfoxide reductase family.</text>
</comment>
<keyword id="KW-0560">Oxidoreductase</keyword>
<accession>B4U465</accession>
<proteinExistence type="inferred from homology"/>